<proteinExistence type="inferred from homology"/>
<organism>
    <name type="scientific">Mycobacterium tuberculosis (strain CDC 1551 / Oshkosh)</name>
    <dbReference type="NCBI Taxonomy" id="83331"/>
    <lineage>
        <taxon>Bacteria</taxon>
        <taxon>Bacillati</taxon>
        <taxon>Actinomycetota</taxon>
        <taxon>Actinomycetes</taxon>
        <taxon>Mycobacteriales</taxon>
        <taxon>Mycobacteriaceae</taxon>
        <taxon>Mycobacterium</taxon>
        <taxon>Mycobacterium tuberculosis complex</taxon>
    </lineage>
</organism>
<sequence>MALKTDIRGMIWRYPDYFIVGREQCREFARAVKCDHPAFFSEEAAADLGYDALVAPLTFVTILAKYVQLDFFRHVDVGMETMQIVQVDQRFVFHKPVLAGDKLWARMDIHSVDERFGADIVVTRNLCTNDDGELVMEAYTTLMGQQGDGSARLKWDKESGQVIRTA</sequence>
<accession>P9WFJ8</accession>
<accession>L0T4B1</accession>
<accession>P96928</accession>
<accession>Q7D9H8</accession>
<dbReference type="EMBL" id="AE000516">
    <property type="protein sequence ID" value="AAK44891.1"/>
    <property type="molecule type" value="Genomic_DNA"/>
</dbReference>
<dbReference type="PIR" id="B70613">
    <property type="entry name" value="B70613"/>
</dbReference>
<dbReference type="SMR" id="P9WFJ8"/>
<dbReference type="KEGG" id="mtc:MT0666"/>
<dbReference type="PATRIC" id="fig|83331.31.peg.708"/>
<dbReference type="HOGENOM" id="CLU_116276_0_1_11"/>
<dbReference type="Proteomes" id="UP000001020">
    <property type="component" value="Chromosome"/>
</dbReference>
<dbReference type="GO" id="GO:0019171">
    <property type="term" value="F:(3R)-hydroxyacyl-[acyl-carrier-protein] dehydratase activity"/>
    <property type="evidence" value="ECO:0007669"/>
    <property type="project" value="TreeGrafter"/>
</dbReference>
<dbReference type="GO" id="GO:0006633">
    <property type="term" value="P:fatty acid biosynthetic process"/>
    <property type="evidence" value="ECO:0007669"/>
    <property type="project" value="TreeGrafter"/>
</dbReference>
<dbReference type="CDD" id="cd03441">
    <property type="entry name" value="R_hydratase_like"/>
    <property type="match status" value="1"/>
</dbReference>
<dbReference type="Gene3D" id="3.10.129.10">
    <property type="entry name" value="Hotdog Thioesterase"/>
    <property type="match status" value="1"/>
</dbReference>
<dbReference type="HAMAP" id="MF_00799">
    <property type="entry name" value="UPF0336"/>
    <property type="match status" value="1"/>
</dbReference>
<dbReference type="InterPro" id="IPR039569">
    <property type="entry name" value="FAS1-like_DH_region"/>
</dbReference>
<dbReference type="InterPro" id="IPR016709">
    <property type="entry name" value="HadA-like"/>
</dbReference>
<dbReference type="InterPro" id="IPR029069">
    <property type="entry name" value="HotDog_dom_sf"/>
</dbReference>
<dbReference type="InterPro" id="IPR050965">
    <property type="entry name" value="UPF0336/Enoyl-CoA_hydratase"/>
</dbReference>
<dbReference type="NCBIfam" id="NF010244">
    <property type="entry name" value="PRK13691.1"/>
    <property type="match status" value="1"/>
</dbReference>
<dbReference type="PANTHER" id="PTHR43437:SF3">
    <property type="entry name" value="HYDROXYACYL-THIOESTER DEHYDRATASE TYPE 2, MITOCHONDRIAL"/>
    <property type="match status" value="1"/>
</dbReference>
<dbReference type="PANTHER" id="PTHR43437">
    <property type="entry name" value="HYDROXYACYL-THIOESTER DEHYDRATASE TYPE 2, MITOCHONDRIAL-RELATED"/>
    <property type="match status" value="1"/>
</dbReference>
<dbReference type="Pfam" id="PF13452">
    <property type="entry name" value="FAS1_DH_region"/>
    <property type="match status" value="1"/>
</dbReference>
<dbReference type="PIRSF" id="PIRSF018072">
    <property type="entry name" value="UCP018072"/>
    <property type="match status" value="1"/>
</dbReference>
<dbReference type="SUPFAM" id="SSF54637">
    <property type="entry name" value="Thioesterase/thiol ester dehydrase-isomerase"/>
    <property type="match status" value="1"/>
</dbReference>
<gene>
    <name type="ordered locus">MT0666</name>
</gene>
<keyword id="KW-1185">Reference proteome</keyword>
<comment type="similarity">
    <text evidence="1">Belongs to the UPF0336 family.</text>
</comment>
<protein>
    <recommendedName>
        <fullName evidence="1">UPF0336 protein MT0666</fullName>
    </recommendedName>
</protein>
<feature type="chain" id="PRO_0000428526" description="UPF0336 protein MT0666">
    <location>
        <begin position="1"/>
        <end position="166"/>
    </location>
</feature>
<name>Y637_MYCTO</name>
<reference key="1">
    <citation type="journal article" date="2002" name="J. Bacteriol.">
        <title>Whole-genome comparison of Mycobacterium tuberculosis clinical and laboratory strains.</title>
        <authorList>
            <person name="Fleischmann R.D."/>
            <person name="Alland D."/>
            <person name="Eisen J.A."/>
            <person name="Carpenter L."/>
            <person name="White O."/>
            <person name="Peterson J.D."/>
            <person name="DeBoy R.T."/>
            <person name="Dodson R.J."/>
            <person name="Gwinn M.L."/>
            <person name="Haft D.H."/>
            <person name="Hickey E.K."/>
            <person name="Kolonay J.F."/>
            <person name="Nelson W.C."/>
            <person name="Umayam L.A."/>
            <person name="Ermolaeva M.D."/>
            <person name="Salzberg S.L."/>
            <person name="Delcher A."/>
            <person name="Utterback T.R."/>
            <person name="Weidman J.F."/>
            <person name="Khouri H.M."/>
            <person name="Gill J."/>
            <person name="Mikula A."/>
            <person name="Bishai W."/>
            <person name="Jacobs W.R. Jr."/>
            <person name="Venter J.C."/>
            <person name="Fraser C.M."/>
        </authorList>
    </citation>
    <scope>NUCLEOTIDE SEQUENCE [LARGE SCALE GENOMIC DNA]</scope>
    <source>
        <strain>CDC 1551 / Oshkosh</strain>
    </source>
</reference>
<evidence type="ECO:0000255" key="1">
    <source>
        <dbReference type="HAMAP-Rule" id="MF_00799"/>
    </source>
</evidence>